<comment type="subcellular location">
    <subcellularLocation>
        <location>Plastid</location>
        <location>Chloroplast</location>
    </subcellularLocation>
</comment>
<comment type="similarity">
    <text evidence="1">Belongs to the bacterial ribosomal protein bS16 family.</text>
</comment>
<gene>
    <name evidence="1" type="primary">rps16</name>
</gene>
<name>RR16_SOLTU</name>
<geneLocation type="chloroplast"/>
<accession>P32087</accession>
<accession>Q27S68</accession>
<accession>Q2VEJ4</accession>
<reference key="1">
    <citation type="journal article" date="1995" name="Plant Physiol.">
        <title>Nucleotide sequence of a cDNA for the potato (Solanum tuberosum L.) chloroplast ribosomal protein S16.</title>
        <authorList>
            <person name="Kang S.G."/>
            <person name="Hannapel D.J."/>
        </authorList>
    </citation>
    <scope>NUCLEOTIDE SEQUENCE [MRNA]</scope>
    <source>
        <strain>cv. Superior</strain>
        <tissue>Axillary bud</tissue>
    </source>
</reference>
<reference key="2">
    <citation type="journal article" date="2006" name="Plant Cell Rep.">
        <title>The complete chloroplast genome sequences of Solanum tuberosum and comparative analysis with Solanaceae species identified the presence of a 241-bp deletion in cultivated potato chloroplast DNA sequence.</title>
        <authorList>
            <person name="Chung H.-J."/>
            <person name="Jung J.D."/>
            <person name="Park H.-W."/>
            <person name="Kim J.-H."/>
            <person name="Cha H.W."/>
            <person name="Min S.R."/>
            <person name="Jeong W.-J."/>
            <person name="Liu J.R."/>
        </authorList>
    </citation>
    <scope>NUCLEOTIDE SEQUENCE [LARGE SCALE GENOMIC DNA]</scope>
    <source>
        <strain>cv. Desiree</strain>
    </source>
</reference>
<reference key="3">
    <citation type="submission" date="2006-02" db="EMBL/GenBank/DDBJ databases">
        <title>Complete chloroplast genome sequences of Solanum tuberosum cultivar Desiree and comparative analyses with other Solanaceae genomes.</title>
        <authorList>
            <person name="Gargano D."/>
            <person name="Scotti N."/>
            <person name="Vezzi A."/>
            <person name="Bilardi A."/>
            <person name="Valle G."/>
            <person name="Grillo S."/>
            <person name="Cardi T."/>
        </authorList>
    </citation>
    <scope>NUCLEOTIDE SEQUENCE [LARGE SCALE GENOMIC DNA]</scope>
    <source>
        <strain>cv. Desiree</strain>
    </source>
</reference>
<reference key="4">
    <citation type="submission" date="1992-01" db="EMBL/GenBank/DDBJ databases">
        <title>Plastid RNAs in potato starch-storing tissues.</title>
        <authorList>
            <person name="du Jardin P."/>
        </authorList>
    </citation>
    <scope>NUCLEOTIDE SEQUENCE [GENOMIC DNA] OF 15-88</scope>
</reference>
<feature type="chain" id="PRO_0000167320" description="Small ribosomal subunit protein bS16c">
    <location>
        <begin position="1"/>
        <end position="88"/>
    </location>
</feature>
<feature type="sequence conflict" description="In Ref. 2; ABB90025." evidence="2" ref="2">
    <original>V</original>
    <variation>A</variation>
    <location>
        <position position="20"/>
    </location>
</feature>
<evidence type="ECO:0000255" key="1">
    <source>
        <dbReference type="HAMAP-Rule" id="MF_00385"/>
    </source>
</evidence>
<evidence type="ECO:0000305" key="2"/>
<sequence>MVKLRLKRCGRKQRAVYRIVAIDVRSRREGKDLQKVGFYDPIKNQTYLNVPAILYFLEKGAQPTETVQDILKKAEVFKELRLNQPKFN</sequence>
<proteinExistence type="inferred from homology"/>
<dbReference type="EMBL" id="U11638">
    <property type="protein sequence ID" value="AAA74421.1"/>
    <property type="molecule type" value="mRNA"/>
</dbReference>
<dbReference type="EMBL" id="DQ231562">
    <property type="protein sequence ID" value="ABB90025.1"/>
    <property type="molecule type" value="Genomic_DNA"/>
</dbReference>
<dbReference type="EMBL" id="DQ386163">
    <property type="protein sequence ID" value="ABD47039.1"/>
    <property type="molecule type" value="Genomic_DNA"/>
</dbReference>
<dbReference type="EMBL" id="Z11741">
    <property type="protein sequence ID" value="CAA77799.1"/>
    <property type="molecule type" value="Genomic_DNA"/>
</dbReference>
<dbReference type="PIR" id="T07057">
    <property type="entry name" value="T07057"/>
</dbReference>
<dbReference type="RefSeq" id="YP_635621.1">
    <property type="nucleotide sequence ID" value="NC_008096.2"/>
</dbReference>
<dbReference type="SMR" id="P32087"/>
<dbReference type="FunCoup" id="P32087">
    <property type="interactions" value="9"/>
</dbReference>
<dbReference type="STRING" id="4113.P32087"/>
<dbReference type="GeneID" id="4099950"/>
<dbReference type="KEGG" id="sot:4099950"/>
<dbReference type="InParanoid" id="P32087"/>
<dbReference type="OrthoDB" id="407221at2759"/>
<dbReference type="Proteomes" id="UP000011115">
    <property type="component" value="Unassembled WGS sequence"/>
</dbReference>
<dbReference type="GO" id="GO:0009507">
    <property type="term" value="C:chloroplast"/>
    <property type="evidence" value="ECO:0007669"/>
    <property type="project" value="UniProtKB-SubCell"/>
</dbReference>
<dbReference type="GO" id="GO:0015935">
    <property type="term" value="C:small ribosomal subunit"/>
    <property type="evidence" value="ECO:0000318"/>
    <property type="project" value="GO_Central"/>
</dbReference>
<dbReference type="GO" id="GO:0003735">
    <property type="term" value="F:structural constituent of ribosome"/>
    <property type="evidence" value="ECO:0000318"/>
    <property type="project" value="GO_Central"/>
</dbReference>
<dbReference type="GO" id="GO:0006412">
    <property type="term" value="P:translation"/>
    <property type="evidence" value="ECO:0007669"/>
    <property type="project" value="UniProtKB-UniRule"/>
</dbReference>
<dbReference type="FunFam" id="3.30.1320.10:FF:000003">
    <property type="entry name" value="30S ribosomal protein S16, chloroplastic"/>
    <property type="match status" value="1"/>
</dbReference>
<dbReference type="Gene3D" id="3.30.1320.10">
    <property type="match status" value="1"/>
</dbReference>
<dbReference type="HAMAP" id="MF_00385">
    <property type="entry name" value="Ribosomal_bS16"/>
    <property type="match status" value="1"/>
</dbReference>
<dbReference type="InterPro" id="IPR000307">
    <property type="entry name" value="Ribosomal_bS16"/>
</dbReference>
<dbReference type="InterPro" id="IPR020592">
    <property type="entry name" value="Ribosomal_bS16_CS"/>
</dbReference>
<dbReference type="InterPro" id="IPR023803">
    <property type="entry name" value="Ribosomal_bS16_dom_sf"/>
</dbReference>
<dbReference type="NCBIfam" id="TIGR00002">
    <property type="entry name" value="S16"/>
    <property type="match status" value="1"/>
</dbReference>
<dbReference type="PANTHER" id="PTHR12919">
    <property type="entry name" value="30S RIBOSOMAL PROTEIN S16"/>
    <property type="match status" value="1"/>
</dbReference>
<dbReference type="PANTHER" id="PTHR12919:SF20">
    <property type="entry name" value="SMALL RIBOSOMAL SUBUNIT PROTEIN BS16M"/>
    <property type="match status" value="1"/>
</dbReference>
<dbReference type="Pfam" id="PF00886">
    <property type="entry name" value="Ribosomal_S16"/>
    <property type="match status" value="1"/>
</dbReference>
<dbReference type="SUPFAM" id="SSF54565">
    <property type="entry name" value="Ribosomal protein S16"/>
    <property type="match status" value="1"/>
</dbReference>
<dbReference type="PROSITE" id="PS00732">
    <property type="entry name" value="RIBOSOMAL_S16"/>
    <property type="match status" value="1"/>
</dbReference>
<protein>
    <recommendedName>
        <fullName evidence="1">Small ribosomal subunit protein bS16c</fullName>
    </recommendedName>
    <alternativeName>
        <fullName evidence="2">30S ribosomal protein S16, chloroplastic</fullName>
    </alternativeName>
</protein>
<organism>
    <name type="scientific">Solanum tuberosum</name>
    <name type="common">Potato</name>
    <dbReference type="NCBI Taxonomy" id="4113"/>
    <lineage>
        <taxon>Eukaryota</taxon>
        <taxon>Viridiplantae</taxon>
        <taxon>Streptophyta</taxon>
        <taxon>Embryophyta</taxon>
        <taxon>Tracheophyta</taxon>
        <taxon>Spermatophyta</taxon>
        <taxon>Magnoliopsida</taxon>
        <taxon>eudicotyledons</taxon>
        <taxon>Gunneridae</taxon>
        <taxon>Pentapetalae</taxon>
        <taxon>asterids</taxon>
        <taxon>lamiids</taxon>
        <taxon>Solanales</taxon>
        <taxon>Solanaceae</taxon>
        <taxon>Solanoideae</taxon>
        <taxon>Solaneae</taxon>
        <taxon>Solanum</taxon>
    </lineage>
</organism>
<keyword id="KW-0150">Chloroplast</keyword>
<keyword id="KW-0934">Plastid</keyword>
<keyword id="KW-1185">Reference proteome</keyword>
<keyword id="KW-0687">Ribonucleoprotein</keyword>
<keyword id="KW-0689">Ribosomal protein</keyword>